<sequence length="218" mass="23787">MRLILLGPPGAGKGTQAAFLTQHYGIPQISTGDMLRAAVKAGTPLGLEAKKVMDAGGLVSDDLIIGLVRDRLTQPDCANGYLFDGFPRTIPQADALKSAGIALDYVVEIEVPESDIIERMSERRVHPASGRSYHVRFNPPKAEGVDDVTGEPLVQRDDDREETVRHRLNVYQNQTRPLVDYYSSWAQSDAAAAPKYRKISGVGSVDEIKSRLSQALQS</sequence>
<accession>P0DKX8</accession>
<accession>P39068</accession>
<dbReference type="EC" id="2.7.4.3" evidence="1"/>
<dbReference type="EMBL" id="BX640419">
    <property type="protein sequence ID" value="CAE43044.1"/>
    <property type="molecule type" value="Genomic_DNA"/>
</dbReference>
<dbReference type="RefSeq" id="NP_881373.1">
    <property type="nucleotide sequence ID" value="NC_002929.2"/>
</dbReference>
<dbReference type="RefSeq" id="WP_010931125.1">
    <property type="nucleotide sequence ID" value="NZ_CP039022.1"/>
</dbReference>
<dbReference type="SMR" id="P0DKX8"/>
<dbReference type="STRING" id="257313.BP2769"/>
<dbReference type="PaxDb" id="257313-BP2769"/>
<dbReference type="GeneID" id="69602670"/>
<dbReference type="KEGG" id="bpe:BP2769"/>
<dbReference type="PATRIC" id="fig|257313.5.peg.2987"/>
<dbReference type="eggNOG" id="COG0563">
    <property type="taxonomic scope" value="Bacteria"/>
</dbReference>
<dbReference type="HOGENOM" id="CLU_032354_1_2_4"/>
<dbReference type="UniPathway" id="UPA00588">
    <property type="reaction ID" value="UER00649"/>
</dbReference>
<dbReference type="Proteomes" id="UP000002676">
    <property type="component" value="Chromosome"/>
</dbReference>
<dbReference type="GO" id="GO:0005737">
    <property type="term" value="C:cytoplasm"/>
    <property type="evidence" value="ECO:0007669"/>
    <property type="project" value="UniProtKB-SubCell"/>
</dbReference>
<dbReference type="GO" id="GO:0004017">
    <property type="term" value="F:adenylate kinase activity"/>
    <property type="evidence" value="ECO:0007669"/>
    <property type="project" value="UniProtKB-UniRule"/>
</dbReference>
<dbReference type="GO" id="GO:0005524">
    <property type="term" value="F:ATP binding"/>
    <property type="evidence" value="ECO:0007669"/>
    <property type="project" value="UniProtKB-UniRule"/>
</dbReference>
<dbReference type="GO" id="GO:0044209">
    <property type="term" value="P:AMP salvage"/>
    <property type="evidence" value="ECO:0007669"/>
    <property type="project" value="UniProtKB-UniRule"/>
</dbReference>
<dbReference type="CDD" id="cd01428">
    <property type="entry name" value="ADK"/>
    <property type="match status" value="1"/>
</dbReference>
<dbReference type="FunFam" id="3.40.50.300:FF:000106">
    <property type="entry name" value="Adenylate kinase mitochondrial"/>
    <property type="match status" value="1"/>
</dbReference>
<dbReference type="Gene3D" id="3.40.50.300">
    <property type="entry name" value="P-loop containing nucleotide triphosphate hydrolases"/>
    <property type="match status" value="1"/>
</dbReference>
<dbReference type="HAMAP" id="MF_00235">
    <property type="entry name" value="Adenylate_kinase_Adk"/>
    <property type="match status" value="1"/>
</dbReference>
<dbReference type="InterPro" id="IPR006259">
    <property type="entry name" value="Adenyl_kin_sub"/>
</dbReference>
<dbReference type="InterPro" id="IPR000850">
    <property type="entry name" value="Adenylat/UMP-CMP_kin"/>
</dbReference>
<dbReference type="InterPro" id="IPR033690">
    <property type="entry name" value="Adenylat_kinase_CS"/>
</dbReference>
<dbReference type="InterPro" id="IPR007862">
    <property type="entry name" value="Adenylate_kinase_lid-dom"/>
</dbReference>
<dbReference type="InterPro" id="IPR027417">
    <property type="entry name" value="P-loop_NTPase"/>
</dbReference>
<dbReference type="NCBIfam" id="TIGR01351">
    <property type="entry name" value="adk"/>
    <property type="match status" value="1"/>
</dbReference>
<dbReference type="NCBIfam" id="NF001379">
    <property type="entry name" value="PRK00279.1-1"/>
    <property type="match status" value="1"/>
</dbReference>
<dbReference type="NCBIfam" id="NF001380">
    <property type="entry name" value="PRK00279.1-2"/>
    <property type="match status" value="1"/>
</dbReference>
<dbReference type="NCBIfam" id="NF001381">
    <property type="entry name" value="PRK00279.1-3"/>
    <property type="match status" value="1"/>
</dbReference>
<dbReference type="NCBIfam" id="NF011100">
    <property type="entry name" value="PRK14527.1"/>
    <property type="match status" value="1"/>
</dbReference>
<dbReference type="PANTHER" id="PTHR23359">
    <property type="entry name" value="NUCLEOTIDE KINASE"/>
    <property type="match status" value="1"/>
</dbReference>
<dbReference type="Pfam" id="PF00406">
    <property type="entry name" value="ADK"/>
    <property type="match status" value="1"/>
</dbReference>
<dbReference type="Pfam" id="PF05191">
    <property type="entry name" value="ADK_lid"/>
    <property type="match status" value="1"/>
</dbReference>
<dbReference type="PRINTS" id="PR00094">
    <property type="entry name" value="ADENYLTKNASE"/>
</dbReference>
<dbReference type="SUPFAM" id="SSF52540">
    <property type="entry name" value="P-loop containing nucleoside triphosphate hydrolases"/>
    <property type="match status" value="1"/>
</dbReference>
<dbReference type="PROSITE" id="PS00113">
    <property type="entry name" value="ADENYLATE_KINASE"/>
    <property type="match status" value="1"/>
</dbReference>
<organism>
    <name type="scientific">Bordetella pertussis (strain Tohama I / ATCC BAA-589 / NCTC 13251)</name>
    <dbReference type="NCBI Taxonomy" id="257313"/>
    <lineage>
        <taxon>Bacteria</taxon>
        <taxon>Pseudomonadati</taxon>
        <taxon>Pseudomonadota</taxon>
        <taxon>Betaproteobacteria</taxon>
        <taxon>Burkholderiales</taxon>
        <taxon>Alcaligenaceae</taxon>
        <taxon>Bordetella</taxon>
    </lineage>
</organism>
<feature type="chain" id="PRO_0000158740" description="Adenylate kinase">
    <location>
        <begin position="1"/>
        <end position="218"/>
    </location>
</feature>
<feature type="region of interest" description="NMP" evidence="1">
    <location>
        <begin position="30"/>
        <end position="59"/>
    </location>
</feature>
<feature type="region of interest" description="LID" evidence="1">
    <location>
        <begin position="122"/>
        <end position="159"/>
    </location>
</feature>
<feature type="binding site" evidence="1">
    <location>
        <begin position="10"/>
        <end position="15"/>
    </location>
    <ligand>
        <name>ATP</name>
        <dbReference type="ChEBI" id="CHEBI:30616"/>
    </ligand>
</feature>
<feature type="binding site" evidence="1">
    <location>
        <position position="31"/>
    </location>
    <ligand>
        <name>AMP</name>
        <dbReference type="ChEBI" id="CHEBI:456215"/>
    </ligand>
</feature>
<feature type="binding site" evidence="1">
    <location>
        <position position="36"/>
    </location>
    <ligand>
        <name>AMP</name>
        <dbReference type="ChEBI" id="CHEBI:456215"/>
    </ligand>
</feature>
<feature type="binding site" evidence="1">
    <location>
        <begin position="57"/>
        <end position="59"/>
    </location>
    <ligand>
        <name>AMP</name>
        <dbReference type="ChEBI" id="CHEBI:456215"/>
    </ligand>
</feature>
<feature type="binding site" evidence="1">
    <location>
        <begin position="85"/>
        <end position="88"/>
    </location>
    <ligand>
        <name>AMP</name>
        <dbReference type="ChEBI" id="CHEBI:456215"/>
    </ligand>
</feature>
<feature type="binding site" evidence="1">
    <location>
        <position position="92"/>
    </location>
    <ligand>
        <name>AMP</name>
        <dbReference type="ChEBI" id="CHEBI:456215"/>
    </ligand>
</feature>
<feature type="binding site" evidence="1">
    <location>
        <position position="123"/>
    </location>
    <ligand>
        <name>ATP</name>
        <dbReference type="ChEBI" id="CHEBI:30616"/>
    </ligand>
</feature>
<feature type="binding site" evidence="1">
    <location>
        <begin position="132"/>
        <end position="133"/>
    </location>
    <ligand>
        <name>ATP</name>
        <dbReference type="ChEBI" id="CHEBI:30616"/>
    </ligand>
</feature>
<feature type="binding site" evidence="1">
    <location>
        <position position="156"/>
    </location>
    <ligand>
        <name>AMP</name>
        <dbReference type="ChEBI" id="CHEBI:456215"/>
    </ligand>
</feature>
<feature type="binding site" evidence="1">
    <location>
        <position position="167"/>
    </location>
    <ligand>
        <name>AMP</name>
        <dbReference type="ChEBI" id="CHEBI:456215"/>
    </ligand>
</feature>
<feature type="binding site" evidence="1">
    <location>
        <position position="203"/>
    </location>
    <ligand>
        <name>ATP</name>
        <dbReference type="ChEBI" id="CHEBI:30616"/>
    </ligand>
</feature>
<proteinExistence type="inferred from homology"/>
<name>KAD_BORPE</name>
<comment type="function">
    <text evidence="1">Catalyzes the reversible transfer of the terminal phosphate group between ATP and AMP. Plays an important role in cellular energy homeostasis and in adenine nucleotide metabolism.</text>
</comment>
<comment type="catalytic activity">
    <reaction evidence="1">
        <text>AMP + ATP = 2 ADP</text>
        <dbReference type="Rhea" id="RHEA:12973"/>
        <dbReference type="ChEBI" id="CHEBI:30616"/>
        <dbReference type="ChEBI" id="CHEBI:456215"/>
        <dbReference type="ChEBI" id="CHEBI:456216"/>
        <dbReference type="EC" id="2.7.4.3"/>
    </reaction>
</comment>
<comment type="pathway">
    <text evidence="1">Purine metabolism; AMP biosynthesis via salvage pathway; AMP from ADP: step 1/1.</text>
</comment>
<comment type="subunit">
    <text evidence="1">Monomer.</text>
</comment>
<comment type="subcellular location">
    <subcellularLocation>
        <location evidence="1">Cytoplasm</location>
    </subcellularLocation>
</comment>
<comment type="domain">
    <text evidence="1">Consists of three domains, a large central CORE domain and two small peripheral domains, NMPbind and LID, which undergo movements during catalysis. The LID domain closes over the site of phosphoryl transfer upon ATP binding. Assembling and dissambling the active center during each catalytic cycle provides an effective means to prevent ATP hydrolysis.</text>
</comment>
<comment type="similarity">
    <text evidence="1">Belongs to the adenylate kinase family.</text>
</comment>
<protein>
    <recommendedName>
        <fullName evidence="1">Adenylate kinase</fullName>
        <shortName evidence="1">AK</shortName>
        <ecNumber evidence="1">2.7.4.3</ecNumber>
    </recommendedName>
    <alternativeName>
        <fullName evidence="1">ATP-AMP transphosphorylase</fullName>
    </alternativeName>
    <alternativeName>
        <fullName evidence="1">ATP:AMP phosphotransferase</fullName>
    </alternativeName>
    <alternativeName>
        <fullName evidence="1">Adenylate monophosphate kinase</fullName>
    </alternativeName>
</protein>
<evidence type="ECO:0000255" key="1">
    <source>
        <dbReference type="HAMAP-Rule" id="MF_00235"/>
    </source>
</evidence>
<reference key="1">
    <citation type="journal article" date="2003" name="Nat. Genet.">
        <title>Comparative analysis of the genome sequences of Bordetella pertussis, Bordetella parapertussis and Bordetella bronchiseptica.</title>
        <authorList>
            <person name="Parkhill J."/>
            <person name="Sebaihia M."/>
            <person name="Preston A."/>
            <person name="Murphy L.D."/>
            <person name="Thomson N.R."/>
            <person name="Harris D.E."/>
            <person name="Holden M.T.G."/>
            <person name="Churcher C.M."/>
            <person name="Bentley S.D."/>
            <person name="Mungall K.L."/>
            <person name="Cerdeno-Tarraga A.-M."/>
            <person name="Temple L."/>
            <person name="James K.D."/>
            <person name="Harris B."/>
            <person name="Quail M.A."/>
            <person name="Achtman M."/>
            <person name="Atkin R."/>
            <person name="Baker S."/>
            <person name="Basham D."/>
            <person name="Bason N."/>
            <person name="Cherevach I."/>
            <person name="Chillingworth T."/>
            <person name="Collins M."/>
            <person name="Cronin A."/>
            <person name="Davis P."/>
            <person name="Doggett J."/>
            <person name="Feltwell T."/>
            <person name="Goble A."/>
            <person name="Hamlin N."/>
            <person name="Hauser H."/>
            <person name="Holroyd S."/>
            <person name="Jagels K."/>
            <person name="Leather S."/>
            <person name="Moule S."/>
            <person name="Norberczak H."/>
            <person name="O'Neil S."/>
            <person name="Ormond D."/>
            <person name="Price C."/>
            <person name="Rabbinowitsch E."/>
            <person name="Rutter S."/>
            <person name="Sanders M."/>
            <person name="Saunders D."/>
            <person name="Seeger K."/>
            <person name="Sharp S."/>
            <person name="Simmonds M."/>
            <person name="Skelton J."/>
            <person name="Squares R."/>
            <person name="Squares S."/>
            <person name="Stevens K."/>
            <person name="Unwin L."/>
            <person name="Whitehead S."/>
            <person name="Barrell B.G."/>
            <person name="Maskell D.J."/>
        </authorList>
    </citation>
    <scope>NUCLEOTIDE SEQUENCE [LARGE SCALE GENOMIC DNA]</scope>
    <source>
        <strain>Tohama I / ATCC BAA-589 / NCTC 13251</strain>
    </source>
</reference>
<gene>
    <name evidence="1" type="primary">adk</name>
    <name type="ordered locus">BP2769</name>
</gene>
<keyword id="KW-0067">ATP-binding</keyword>
<keyword id="KW-0963">Cytoplasm</keyword>
<keyword id="KW-0418">Kinase</keyword>
<keyword id="KW-0545">Nucleotide biosynthesis</keyword>
<keyword id="KW-0547">Nucleotide-binding</keyword>
<keyword id="KW-1185">Reference proteome</keyword>
<keyword id="KW-0808">Transferase</keyword>